<comment type="function">
    <text evidence="1">Catalyzes a salvage reaction resulting in the formation of AMP, that is energically less costly than de novo synthesis.</text>
</comment>
<comment type="catalytic activity">
    <reaction evidence="1">
        <text>AMP + diphosphate = 5-phospho-alpha-D-ribose 1-diphosphate + adenine</text>
        <dbReference type="Rhea" id="RHEA:16609"/>
        <dbReference type="ChEBI" id="CHEBI:16708"/>
        <dbReference type="ChEBI" id="CHEBI:33019"/>
        <dbReference type="ChEBI" id="CHEBI:58017"/>
        <dbReference type="ChEBI" id="CHEBI:456215"/>
        <dbReference type="EC" id="2.4.2.7"/>
    </reaction>
</comment>
<comment type="pathway">
    <text evidence="1">Purine metabolism; AMP biosynthesis via salvage pathway; AMP from adenine: step 1/1.</text>
</comment>
<comment type="subunit">
    <text evidence="1">Homodimer.</text>
</comment>
<comment type="subcellular location">
    <subcellularLocation>
        <location evidence="1">Cytoplasm</location>
    </subcellularLocation>
</comment>
<comment type="similarity">
    <text evidence="1">Belongs to the purine/pyrimidine phosphoribosyltransferase family.</text>
</comment>
<organism>
    <name type="scientific">Bacteroides fragilis (strain YCH46)</name>
    <dbReference type="NCBI Taxonomy" id="295405"/>
    <lineage>
        <taxon>Bacteria</taxon>
        <taxon>Pseudomonadati</taxon>
        <taxon>Bacteroidota</taxon>
        <taxon>Bacteroidia</taxon>
        <taxon>Bacteroidales</taxon>
        <taxon>Bacteroidaceae</taxon>
        <taxon>Bacteroides</taxon>
    </lineage>
</organism>
<feature type="chain" id="PRO_0000149349" description="Adenine phosphoribosyltransferase">
    <location>
        <begin position="1"/>
        <end position="178"/>
    </location>
</feature>
<dbReference type="EC" id="2.4.2.7" evidence="1"/>
<dbReference type="EMBL" id="AP006841">
    <property type="protein sequence ID" value="BAD46848.1"/>
    <property type="molecule type" value="Genomic_DNA"/>
</dbReference>
<dbReference type="RefSeq" id="WP_011201864.1">
    <property type="nucleotide sequence ID" value="NC_006347.1"/>
</dbReference>
<dbReference type="RefSeq" id="YP_097382.1">
    <property type="nucleotide sequence ID" value="NC_006347.1"/>
</dbReference>
<dbReference type="SMR" id="Q650H6"/>
<dbReference type="STRING" id="295405.BF0099"/>
<dbReference type="KEGG" id="bfr:BF0099"/>
<dbReference type="PATRIC" id="fig|295405.11.peg.137"/>
<dbReference type="HOGENOM" id="CLU_063339_3_0_10"/>
<dbReference type="OrthoDB" id="9803963at2"/>
<dbReference type="UniPathway" id="UPA00588">
    <property type="reaction ID" value="UER00646"/>
</dbReference>
<dbReference type="Proteomes" id="UP000002197">
    <property type="component" value="Chromosome"/>
</dbReference>
<dbReference type="GO" id="GO:0005737">
    <property type="term" value="C:cytoplasm"/>
    <property type="evidence" value="ECO:0007669"/>
    <property type="project" value="UniProtKB-SubCell"/>
</dbReference>
<dbReference type="GO" id="GO:0002055">
    <property type="term" value="F:adenine binding"/>
    <property type="evidence" value="ECO:0007669"/>
    <property type="project" value="TreeGrafter"/>
</dbReference>
<dbReference type="GO" id="GO:0003999">
    <property type="term" value="F:adenine phosphoribosyltransferase activity"/>
    <property type="evidence" value="ECO:0007669"/>
    <property type="project" value="UniProtKB-UniRule"/>
</dbReference>
<dbReference type="GO" id="GO:0016208">
    <property type="term" value="F:AMP binding"/>
    <property type="evidence" value="ECO:0007669"/>
    <property type="project" value="TreeGrafter"/>
</dbReference>
<dbReference type="GO" id="GO:0006168">
    <property type="term" value="P:adenine salvage"/>
    <property type="evidence" value="ECO:0007669"/>
    <property type="project" value="InterPro"/>
</dbReference>
<dbReference type="GO" id="GO:0044209">
    <property type="term" value="P:AMP salvage"/>
    <property type="evidence" value="ECO:0007669"/>
    <property type="project" value="UniProtKB-UniRule"/>
</dbReference>
<dbReference type="GO" id="GO:0006166">
    <property type="term" value="P:purine ribonucleoside salvage"/>
    <property type="evidence" value="ECO:0007669"/>
    <property type="project" value="UniProtKB-KW"/>
</dbReference>
<dbReference type="CDD" id="cd06223">
    <property type="entry name" value="PRTases_typeI"/>
    <property type="match status" value="1"/>
</dbReference>
<dbReference type="FunFam" id="3.40.50.2020:FF:000021">
    <property type="entry name" value="Adenine phosphoribosyltransferase"/>
    <property type="match status" value="1"/>
</dbReference>
<dbReference type="Gene3D" id="3.40.50.2020">
    <property type="match status" value="1"/>
</dbReference>
<dbReference type="HAMAP" id="MF_00004">
    <property type="entry name" value="Aden_phosphoribosyltr"/>
    <property type="match status" value="1"/>
</dbReference>
<dbReference type="InterPro" id="IPR005764">
    <property type="entry name" value="Ade_phspho_trans"/>
</dbReference>
<dbReference type="InterPro" id="IPR000836">
    <property type="entry name" value="PRibTrfase_dom"/>
</dbReference>
<dbReference type="InterPro" id="IPR029057">
    <property type="entry name" value="PRTase-like"/>
</dbReference>
<dbReference type="InterPro" id="IPR050054">
    <property type="entry name" value="UPRTase/APRTase"/>
</dbReference>
<dbReference type="NCBIfam" id="TIGR01090">
    <property type="entry name" value="apt"/>
    <property type="match status" value="1"/>
</dbReference>
<dbReference type="NCBIfam" id="NF002634">
    <property type="entry name" value="PRK02304.1-3"/>
    <property type="match status" value="1"/>
</dbReference>
<dbReference type="NCBIfam" id="NF002636">
    <property type="entry name" value="PRK02304.1-5"/>
    <property type="match status" value="1"/>
</dbReference>
<dbReference type="PANTHER" id="PTHR32315">
    <property type="entry name" value="ADENINE PHOSPHORIBOSYLTRANSFERASE"/>
    <property type="match status" value="1"/>
</dbReference>
<dbReference type="PANTHER" id="PTHR32315:SF3">
    <property type="entry name" value="ADENINE PHOSPHORIBOSYLTRANSFERASE"/>
    <property type="match status" value="1"/>
</dbReference>
<dbReference type="Pfam" id="PF00156">
    <property type="entry name" value="Pribosyltran"/>
    <property type="match status" value="1"/>
</dbReference>
<dbReference type="SUPFAM" id="SSF53271">
    <property type="entry name" value="PRTase-like"/>
    <property type="match status" value="1"/>
</dbReference>
<evidence type="ECO:0000255" key="1">
    <source>
        <dbReference type="HAMAP-Rule" id="MF_00004"/>
    </source>
</evidence>
<proteinExistence type="inferred from homology"/>
<reference key="1">
    <citation type="journal article" date="2004" name="Proc. Natl. Acad. Sci. U.S.A.">
        <title>Genomic analysis of Bacteroides fragilis reveals extensive DNA inversions regulating cell surface adaptation.</title>
        <authorList>
            <person name="Kuwahara T."/>
            <person name="Yamashita A."/>
            <person name="Hirakawa H."/>
            <person name="Nakayama H."/>
            <person name="Toh H."/>
            <person name="Okada N."/>
            <person name="Kuhara S."/>
            <person name="Hattori M."/>
            <person name="Hayashi T."/>
            <person name="Ohnishi Y."/>
        </authorList>
    </citation>
    <scope>NUCLEOTIDE SEQUENCE [LARGE SCALE GENOMIC DNA]</scope>
    <source>
        <strain>YCH46</strain>
    </source>
</reference>
<name>APT_BACFR</name>
<gene>
    <name evidence="1" type="primary">apt</name>
    <name type="ordered locus">BF0099</name>
</gene>
<keyword id="KW-0963">Cytoplasm</keyword>
<keyword id="KW-0328">Glycosyltransferase</keyword>
<keyword id="KW-0660">Purine salvage</keyword>
<keyword id="KW-0808">Transferase</keyword>
<protein>
    <recommendedName>
        <fullName evidence="1">Adenine phosphoribosyltransferase</fullName>
        <shortName evidence="1">APRT</shortName>
        <ecNumber evidence="1">2.4.2.7</ecNumber>
    </recommendedName>
</protein>
<accession>Q650H6</accession>
<sequence>MIMSKEKLIKSIREIPDFPIPGILFYDVTTLFKDSERLQELSDIMYEMYKDKGITKVVGIESRGFIMGPILATRLGAGFIPIRKPGKLPAETMEESYDKEYGKDTVQIHKDALNENDVVLLHDDLLATGGTMKAACNLVKKLYPKKVYVNFIIELKELNGKQVFENDQDVDIQSVLSL</sequence>